<protein>
    <recommendedName>
        <fullName evidence="1">Large ribosomal subunit protein bL19</fullName>
    </recommendedName>
    <alternativeName>
        <fullName evidence="2">50S ribosomal protein L19</fullName>
    </alternativeName>
</protein>
<proteinExistence type="inferred from homology"/>
<feature type="chain" id="PRO_1000049671" description="Large ribosomal subunit protein bL19">
    <location>
        <begin position="1"/>
        <end position="115"/>
    </location>
</feature>
<reference key="1">
    <citation type="journal article" date="2007" name="J. Bacteriol.">
        <title>The genome sequence of avian pathogenic Escherichia coli strain O1:K1:H7 shares strong similarities with human extraintestinal pathogenic E. coli genomes.</title>
        <authorList>
            <person name="Johnson T.J."/>
            <person name="Kariyawasam S."/>
            <person name="Wannemuehler Y."/>
            <person name="Mangiamele P."/>
            <person name="Johnson S.J."/>
            <person name="Doetkott C."/>
            <person name="Skyberg J.A."/>
            <person name="Lynne A.M."/>
            <person name="Johnson J.R."/>
            <person name="Nolan L.K."/>
        </authorList>
    </citation>
    <scope>NUCLEOTIDE SEQUENCE [LARGE SCALE GENOMIC DNA]</scope>
</reference>
<comment type="function">
    <text evidence="1">This protein is located at the 30S-50S ribosomal subunit interface and may play a role in the structure and function of the aminoacyl-tRNA binding site.</text>
</comment>
<comment type="similarity">
    <text evidence="1">Belongs to the bacterial ribosomal protein bL19 family.</text>
</comment>
<accession>A1AED6</accession>
<evidence type="ECO:0000255" key="1">
    <source>
        <dbReference type="HAMAP-Rule" id="MF_00402"/>
    </source>
</evidence>
<evidence type="ECO:0000305" key="2"/>
<gene>
    <name evidence="1" type="primary">rplS</name>
    <name type="ordered locus">Ecok1_25320</name>
    <name type="ORF">APECO1_3927</name>
</gene>
<dbReference type="EMBL" id="CP000468">
    <property type="protein sequence ID" value="ABJ02026.1"/>
    <property type="molecule type" value="Genomic_DNA"/>
</dbReference>
<dbReference type="RefSeq" id="WP_000065253.1">
    <property type="nucleotide sequence ID" value="NZ_CADILS010000033.1"/>
</dbReference>
<dbReference type="SMR" id="A1AED6"/>
<dbReference type="GeneID" id="93774456"/>
<dbReference type="KEGG" id="ecv:APECO1_3927"/>
<dbReference type="HOGENOM" id="CLU_103507_2_1_6"/>
<dbReference type="Proteomes" id="UP000008216">
    <property type="component" value="Chromosome"/>
</dbReference>
<dbReference type="GO" id="GO:0022625">
    <property type="term" value="C:cytosolic large ribosomal subunit"/>
    <property type="evidence" value="ECO:0007669"/>
    <property type="project" value="TreeGrafter"/>
</dbReference>
<dbReference type="GO" id="GO:0003735">
    <property type="term" value="F:structural constituent of ribosome"/>
    <property type="evidence" value="ECO:0007669"/>
    <property type="project" value="InterPro"/>
</dbReference>
<dbReference type="GO" id="GO:0006412">
    <property type="term" value="P:translation"/>
    <property type="evidence" value="ECO:0007669"/>
    <property type="project" value="UniProtKB-UniRule"/>
</dbReference>
<dbReference type="FunFam" id="2.30.30.790:FF:000001">
    <property type="entry name" value="50S ribosomal protein L19"/>
    <property type="match status" value="1"/>
</dbReference>
<dbReference type="Gene3D" id="2.30.30.790">
    <property type="match status" value="1"/>
</dbReference>
<dbReference type="HAMAP" id="MF_00402">
    <property type="entry name" value="Ribosomal_bL19"/>
    <property type="match status" value="1"/>
</dbReference>
<dbReference type="InterPro" id="IPR001857">
    <property type="entry name" value="Ribosomal_bL19"/>
</dbReference>
<dbReference type="InterPro" id="IPR018257">
    <property type="entry name" value="Ribosomal_bL19_CS"/>
</dbReference>
<dbReference type="InterPro" id="IPR038657">
    <property type="entry name" value="Ribosomal_bL19_sf"/>
</dbReference>
<dbReference type="InterPro" id="IPR008991">
    <property type="entry name" value="Translation_prot_SH3-like_sf"/>
</dbReference>
<dbReference type="NCBIfam" id="TIGR01024">
    <property type="entry name" value="rplS_bact"/>
    <property type="match status" value="1"/>
</dbReference>
<dbReference type="PANTHER" id="PTHR15680:SF9">
    <property type="entry name" value="LARGE RIBOSOMAL SUBUNIT PROTEIN BL19M"/>
    <property type="match status" value="1"/>
</dbReference>
<dbReference type="PANTHER" id="PTHR15680">
    <property type="entry name" value="RIBOSOMAL PROTEIN L19"/>
    <property type="match status" value="1"/>
</dbReference>
<dbReference type="Pfam" id="PF01245">
    <property type="entry name" value="Ribosomal_L19"/>
    <property type="match status" value="1"/>
</dbReference>
<dbReference type="PIRSF" id="PIRSF002191">
    <property type="entry name" value="Ribosomal_L19"/>
    <property type="match status" value="1"/>
</dbReference>
<dbReference type="PRINTS" id="PR00061">
    <property type="entry name" value="RIBOSOMALL19"/>
</dbReference>
<dbReference type="SUPFAM" id="SSF50104">
    <property type="entry name" value="Translation proteins SH3-like domain"/>
    <property type="match status" value="1"/>
</dbReference>
<dbReference type="PROSITE" id="PS01015">
    <property type="entry name" value="RIBOSOMAL_L19"/>
    <property type="match status" value="1"/>
</dbReference>
<keyword id="KW-1185">Reference proteome</keyword>
<keyword id="KW-0687">Ribonucleoprotein</keyword>
<keyword id="KW-0689">Ribosomal protein</keyword>
<name>RL19_ECOK1</name>
<sequence>MSNIIKQLEQEQMKQDVPSFRPGDTVEVKVWVVEGSKKRLQAFEGVVIAIRNRGLHSAFTVRKISNGEGVERVFQTHSPVVDSISVKRRGAVRKAKLYYLRERTGKAARIKERLN</sequence>
<organism>
    <name type="scientific">Escherichia coli O1:K1 / APEC</name>
    <dbReference type="NCBI Taxonomy" id="405955"/>
    <lineage>
        <taxon>Bacteria</taxon>
        <taxon>Pseudomonadati</taxon>
        <taxon>Pseudomonadota</taxon>
        <taxon>Gammaproteobacteria</taxon>
        <taxon>Enterobacterales</taxon>
        <taxon>Enterobacteriaceae</taxon>
        <taxon>Escherichia</taxon>
    </lineage>
</organism>